<organismHost>
    <name type="scientific">Rhinolophus macrotis</name>
    <name type="common">Big-eared horseshoe bat</name>
    <dbReference type="NCBI Taxonomy" id="196889"/>
</organismHost>
<protein>
    <recommendedName>
        <fullName>Replicase polyprotein 1a</fullName>
        <shortName>pp1a</shortName>
    </recommendedName>
    <alternativeName>
        <fullName>ORF1a polyprotein</fullName>
    </alternativeName>
    <component>
        <recommendedName>
            <fullName>Non-structural protein 1</fullName>
            <shortName>nsp1</shortName>
        </recommendedName>
        <alternativeName>
            <fullName>Leader protein</fullName>
        </alternativeName>
    </component>
    <component>
        <recommendedName>
            <fullName>Non-structural protein 2</fullName>
            <shortName>nsp2</shortName>
        </recommendedName>
        <alternativeName>
            <fullName>p65 homolog</fullName>
        </alternativeName>
    </component>
    <component>
        <recommendedName>
            <fullName>Papain-like protease nsp3</fullName>
            <shortName>PL-PRO</shortName>
            <ecNumber>3.4.19.12</ecNumber>
            <ecNumber>3.4.22.-</ecNumber>
        </recommendedName>
        <alternativeName>
            <fullName>Non-structural protein 3</fullName>
            <shortName>nsp3</shortName>
        </alternativeName>
        <alternativeName>
            <fullName>PL2-PRO</fullName>
        </alternativeName>
    </component>
    <component>
        <recommendedName>
            <fullName>Non-structural protein 4</fullName>
            <shortName>nsp4</shortName>
        </recommendedName>
    </component>
    <component>
        <recommendedName>
            <fullName>3C-like proteinase nsp5</fullName>
            <shortName>3CL-PRO</shortName>
            <shortName>3CLp</shortName>
            <ecNumber>3.4.22.69</ecNumber>
        </recommendedName>
        <alternativeName>
            <fullName>nsp5</fullName>
        </alternativeName>
    </component>
    <component>
        <recommendedName>
            <fullName>Non-structural protein 6</fullName>
            <shortName>nsp6</shortName>
        </recommendedName>
    </component>
    <component>
        <recommendedName>
            <fullName>Non-structural protein 7</fullName>
            <shortName>nsp7</shortName>
        </recommendedName>
    </component>
    <component>
        <recommendedName>
            <fullName>Non-structural protein 8</fullName>
            <shortName>nsp8</shortName>
        </recommendedName>
    </component>
    <component>
        <recommendedName>
            <fullName>RNA-capping enzyme subunit nsp9</fullName>
        </recommendedName>
        <alternativeName>
            <fullName>Non-structural protein 9</fullName>
            <shortName>nsp9</shortName>
            <ecNumber>2.7.7.50</ecNumber>
        </alternativeName>
    </component>
    <component>
        <recommendedName>
            <fullName>Non-structural protein 10</fullName>
            <shortName>nsp10</shortName>
        </recommendedName>
        <alternativeName>
            <fullName>Growth factor-like peptide</fullName>
            <shortName>GFL</shortName>
        </alternativeName>
    </component>
    <component>
        <recommendedName>
            <fullName>Non-structural protein 11</fullName>
            <shortName>nsp11</shortName>
        </recommendedName>
    </component>
</protein>
<feature type="chain" id="PRO_0000338038" description="Replicase polyprotein 1a">
    <location>
        <begin position="1"/>
        <end position="4388"/>
    </location>
</feature>
<feature type="chain" id="PRO_0000338039" description="Non-structural protein 1" evidence="1">
    <location>
        <begin position="1"/>
        <end position="179"/>
    </location>
</feature>
<feature type="chain" id="PRO_0000338040" description="Non-structural protein 2" evidence="1">
    <location>
        <begin position="180"/>
        <end position="818"/>
    </location>
</feature>
<feature type="chain" id="PRO_0000338041" description="Papain-like protease nsp3" evidence="1">
    <location>
        <begin position="819"/>
        <end position="2746"/>
    </location>
</feature>
<feature type="chain" id="PRO_0000338042" description="Non-structural protein 4" evidence="1">
    <location>
        <begin position="2747"/>
        <end position="3246"/>
    </location>
</feature>
<feature type="chain" id="PRO_0000338043" description="3C-like proteinase nsp5" evidence="1">
    <location>
        <begin position="3247"/>
        <end position="3552"/>
    </location>
</feature>
<feature type="chain" id="PRO_0000338044" description="Non-structural protein 6" evidence="1">
    <location>
        <begin position="3553"/>
        <end position="3842"/>
    </location>
</feature>
<feature type="chain" id="PRO_0000338045" description="Non-structural protein 7" evidence="1">
    <location>
        <begin position="3843"/>
        <end position="3925"/>
    </location>
</feature>
<feature type="chain" id="PRO_0000338046" description="Non-structural protein 8" evidence="1">
    <location>
        <begin position="3926"/>
        <end position="4123"/>
    </location>
</feature>
<feature type="chain" id="PRO_0000338047" description="RNA-capping enzyme subunit nsp9" evidence="1">
    <location>
        <begin position="4124"/>
        <end position="4236"/>
    </location>
</feature>
<feature type="chain" id="PRO_0000338048" description="Non-structural protein 10" evidence="1">
    <location>
        <begin position="4237"/>
        <end position="4375"/>
    </location>
</feature>
<feature type="chain" id="PRO_0000338049" description="Non-structural protein 11" evidence="3">
    <location>
        <begin position="4376"/>
        <end position="4388"/>
    </location>
</feature>
<feature type="transmembrane region" description="Helical" evidence="3">
    <location>
        <begin position="2209"/>
        <end position="2229"/>
    </location>
</feature>
<feature type="transmembrane region" description="Helical" evidence="3">
    <location>
        <begin position="2310"/>
        <end position="2330"/>
    </location>
</feature>
<feature type="transmembrane region" description="Helical" evidence="3">
    <location>
        <begin position="2357"/>
        <end position="2377"/>
    </location>
</feature>
<feature type="transmembrane region" description="Helical" evidence="3">
    <location>
        <begin position="2761"/>
        <end position="2781"/>
    </location>
</feature>
<feature type="transmembrane region" description="Helical" evidence="3">
    <location>
        <begin position="2998"/>
        <end position="3018"/>
    </location>
</feature>
<feature type="transmembrane region" description="Helical" evidence="3">
    <location>
        <begin position="3028"/>
        <end position="3048"/>
    </location>
</feature>
<feature type="transmembrane region" description="Helical" evidence="3">
    <location>
        <begin position="3060"/>
        <end position="3080"/>
    </location>
</feature>
<feature type="transmembrane region" description="Helical" evidence="3">
    <location>
        <begin position="3083"/>
        <end position="3103"/>
    </location>
</feature>
<feature type="transmembrane region" description="Helical" evidence="3">
    <location>
        <begin position="3111"/>
        <end position="3131"/>
    </location>
</feature>
<feature type="transmembrane region" description="Helical" evidence="3">
    <location>
        <begin position="3148"/>
        <end position="3168"/>
    </location>
</feature>
<feature type="transmembrane region" description="Helical" evidence="3">
    <location>
        <begin position="3570"/>
        <end position="3590"/>
    </location>
</feature>
<feature type="transmembrane region" description="Helical" evidence="3">
    <location>
        <begin position="3592"/>
        <end position="3612"/>
    </location>
</feature>
<feature type="transmembrane region" description="Helical" evidence="3">
    <location>
        <begin position="3618"/>
        <end position="3638"/>
    </location>
</feature>
<feature type="transmembrane region" description="Helical" evidence="3">
    <location>
        <begin position="3665"/>
        <end position="3684"/>
    </location>
</feature>
<feature type="transmembrane region" description="Helical" evidence="3">
    <location>
        <begin position="3691"/>
        <end position="3710"/>
    </location>
</feature>
<feature type="transmembrane region" description="Helical" evidence="3">
    <location>
        <begin position="3734"/>
        <end position="3754"/>
    </location>
</feature>
<feature type="transmembrane region" description="Helical" evidence="3">
    <location>
        <begin position="3762"/>
        <end position="3782"/>
    </location>
</feature>
<feature type="domain" description="CoV Nsp1 globular" evidence="15">
    <location>
        <begin position="12"/>
        <end position="127"/>
    </location>
</feature>
<feature type="domain" description="BetaCoV Nsp1 C-terminal" evidence="16">
    <location>
        <begin position="148"/>
        <end position="179"/>
    </location>
</feature>
<feature type="domain" description="CoV Nsp2 N-terminal" evidence="17">
    <location>
        <begin position="183"/>
        <end position="456"/>
    </location>
</feature>
<feature type="domain" description="CoV Nsp2 middle" evidence="18">
    <location>
        <begin position="458"/>
        <end position="688"/>
    </location>
</feature>
<feature type="domain" description="CoV Nsp2 C-terminal" evidence="19">
    <location>
        <begin position="690"/>
        <end position="818"/>
    </location>
</feature>
<feature type="domain" description="Ubiquitin-like 1" evidence="4">
    <location>
        <begin position="822"/>
        <end position="930"/>
    </location>
</feature>
<feature type="domain" description="Macro 1" evidence="6">
    <location>
        <begin position="1001"/>
        <end position="1167"/>
    </location>
</feature>
<feature type="domain" description="Macro 2" evidence="6">
    <location>
        <begin position="1213"/>
        <end position="1341"/>
    </location>
</feature>
<feature type="domain" description="Macro 3" evidence="6">
    <location>
        <begin position="1349"/>
        <end position="1476"/>
    </location>
</feature>
<feature type="domain" description="DPUP" evidence="8">
    <location>
        <begin position="1478"/>
        <end position="1544"/>
    </location>
</feature>
<feature type="domain" description="Ubiquitin-like 2" evidence="4">
    <location>
        <begin position="1548"/>
        <end position="1603"/>
    </location>
</feature>
<feature type="domain" description="Peptidase C16" evidence="5">
    <location>
        <begin position="1617"/>
        <end position="1881"/>
    </location>
</feature>
<feature type="domain" description="Nucleic acid-binding" evidence="9">
    <location>
        <begin position="1894"/>
        <end position="2004"/>
    </location>
</feature>
<feature type="domain" description="G2M" evidence="22">
    <location>
        <begin position="2029"/>
        <end position="2138"/>
    </location>
</feature>
<feature type="domain" description="3Ecto" evidence="21">
    <location>
        <begin position="2230"/>
        <end position="2300"/>
    </location>
</feature>
<feature type="domain" description="CoV Nsp3 Y" evidence="20">
    <location>
        <begin position="2378"/>
        <end position="2746"/>
    </location>
</feature>
<feature type="domain" description="Nsp4C" evidence="10">
    <location>
        <begin position="3148"/>
        <end position="3246"/>
    </location>
</feature>
<feature type="domain" description="Peptidase C30" evidence="7">
    <location>
        <begin position="3247"/>
        <end position="3552"/>
    </location>
</feature>
<feature type="domain" description="RdRp Nsp7 cofactor" evidence="11">
    <location>
        <begin position="3843"/>
        <end position="3925"/>
    </location>
</feature>
<feature type="domain" description="RdRp Nsp8 cofactor" evidence="12">
    <location>
        <begin position="3926"/>
        <end position="4123"/>
    </location>
</feature>
<feature type="domain" description="Nsp9 ssRNA-binding" evidence="13">
    <location>
        <begin position="4124"/>
        <end position="4236"/>
    </location>
</feature>
<feature type="domain" description="ExoN/MTase coactivator" evidence="14">
    <location>
        <begin position="4237"/>
        <end position="4375"/>
    </location>
</feature>
<feature type="zinc finger region" description="C4-type" evidence="5">
    <location>
        <begin position="1735"/>
        <end position="1772"/>
    </location>
</feature>
<feature type="zinc finger region" evidence="1">
    <location>
        <begin position="4310"/>
        <end position="4326"/>
    </location>
</feature>
<feature type="zinc finger region" evidence="1">
    <location>
        <begin position="4353"/>
        <end position="4366"/>
    </location>
</feature>
<feature type="region of interest" description="C2H2" evidence="17">
    <location>
        <begin position="200"/>
        <end position="236"/>
    </location>
</feature>
<feature type="region of interest" description="C4" evidence="17">
    <location>
        <begin position="323"/>
        <end position="344"/>
    </location>
</feature>
<feature type="region of interest" description="C2HC" evidence="17">
    <location>
        <begin position="370"/>
        <end position="416"/>
    </location>
</feature>
<feature type="region of interest" description="HD1" evidence="1">
    <location>
        <begin position="2098"/>
        <end position="2377"/>
    </location>
</feature>
<feature type="region of interest" description="Y1" evidence="20">
    <location>
        <begin position="2378"/>
        <end position="2468"/>
    </location>
</feature>
<feature type="region of interest" description="ZF1" evidence="20">
    <location>
        <begin position="2382"/>
        <end position="2395"/>
    </location>
</feature>
<feature type="region of interest" description="ZF2" evidence="20">
    <location>
        <begin position="2428"/>
        <end position="2438"/>
    </location>
</feature>
<feature type="region of interest" description="CoV-Y" evidence="20">
    <location>
        <begin position="2469"/>
        <end position="2746"/>
    </location>
</feature>
<feature type="region of interest" description="Y2" evidence="20">
    <location>
        <begin position="2469"/>
        <end position="2563"/>
    </location>
</feature>
<feature type="region of interest" description="Y3" evidence="20">
    <location>
        <begin position="2564"/>
        <end position="2645"/>
    </location>
</feature>
<feature type="region of interest" description="Y4" evidence="20">
    <location>
        <begin position="2646"/>
        <end position="2746"/>
    </location>
</feature>
<feature type="region of interest" description="HD2" evidence="1">
    <location>
        <begin position="2761"/>
        <end position="3168"/>
    </location>
</feature>
<feature type="region of interest" description="HD3" evidence="1">
    <location>
        <begin position="3570"/>
        <end position="3782"/>
    </location>
</feature>
<feature type="active site" description="For PL-PRO activity" evidence="5">
    <location>
        <position position="1657"/>
    </location>
</feature>
<feature type="active site" description="For PL-PRO activity" evidence="5">
    <location>
        <position position="1818"/>
    </location>
</feature>
<feature type="active site" description="For PL-PRO activity" evidence="5">
    <location>
        <position position="1832"/>
    </location>
</feature>
<feature type="active site" description="For 3CL-PRO activity" evidence="7">
    <location>
        <position position="3287"/>
    </location>
</feature>
<feature type="active site" description="For 3CL-PRO activity" evidence="7">
    <location>
        <position position="3391"/>
    </location>
</feature>
<feature type="binding site" evidence="17">
    <location>
        <position position="200"/>
    </location>
    <ligand>
        <name>Zn(2+)</name>
        <dbReference type="ChEBI" id="CHEBI:29105"/>
        <label>1</label>
    </ligand>
</feature>
<feature type="binding site" evidence="17">
    <location>
        <position position="231"/>
    </location>
    <ligand>
        <name>Zn(2+)</name>
        <dbReference type="ChEBI" id="CHEBI:29105"/>
        <label>1</label>
    </ligand>
</feature>
<feature type="binding site" evidence="17">
    <location>
        <position position="234"/>
    </location>
    <ligand>
        <name>Zn(2+)</name>
        <dbReference type="ChEBI" id="CHEBI:29105"/>
        <label>1</label>
    </ligand>
</feature>
<feature type="binding site" evidence="17">
    <location>
        <position position="236"/>
    </location>
    <ligand>
        <name>Zn(2+)</name>
        <dbReference type="ChEBI" id="CHEBI:29105"/>
        <label>1</label>
    </ligand>
</feature>
<feature type="binding site" evidence="17">
    <location>
        <position position="323"/>
    </location>
    <ligand>
        <name>Zn(2+)</name>
        <dbReference type="ChEBI" id="CHEBI:29105"/>
        <label>2</label>
    </ligand>
</feature>
<feature type="binding site" evidence="17">
    <location>
        <position position="326"/>
    </location>
    <ligand>
        <name>Zn(2+)</name>
        <dbReference type="ChEBI" id="CHEBI:29105"/>
        <label>2</label>
    </ligand>
</feature>
<feature type="binding site" evidence="17">
    <location>
        <position position="341"/>
    </location>
    <ligand>
        <name>Zn(2+)</name>
        <dbReference type="ChEBI" id="CHEBI:29105"/>
        <label>2</label>
    </ligand>
</feature>
<feature type="binding site" evidence="17">
    <location>
        <position position="344"/>
    </location>
    <ligand>
        <name>Zn(2+)</name>
        <dbReference type="ChEBI" id="CHEBI:29105"/>
        <label>2</label>
    </ligand>
</feature>
<feature type="binding site" evidence="17">
    <location>
        <position position="370"/>
    </location>
    <ligand>
        <name>Zn(2+)</name>
        <dbReference type="ChEBI" id="CHEBI:29105"/>
        <label>3</label>
    </ligand>
</feature>
<feature type="binding site" evidence="17">
    <location>
        <position position="373"/>
    </location>
    <ligand>
        <name>Zn(2+)</name>
        <dbReference type="ChEBI" id="CHEBI:29105"/>
        <label>3</label>
    </ligand>
</feature>
<feature type="binding site" evidence="17">
    <location>
        <position position="382"/>
    </location>
    <ligand>
        <name>Zn(2+)</name>
        <dbReference type="ChEBI" id="CHEBI:29105"/>
        <label>3</label>
    </ligand>
</feature>
<feature type="binding site" evidence="17">
    <location>
        <position position="416"/>
    </location>
    <ligand>
        <name>Zn(2+)</name>
        <dbReference type="ChEBI" id="CHEBI:29105"/>
        <label>3</label>
    </ligand>
</feature>
<feature type="binding site" evidence="5">
    <location>
        <position position="1735"/>
    </location>
    <ligand>
        <name>Zn(2+)</name>
        <dbReference type="ChEBI" id="CHEBI:29105"/>
        <label>4</label>
    </ligand>
</feature>
<feature type="binding site" evidence="5">
    <location>
        <position position="1738"/>
    </location>
    <ligand>
        <name>Zn(2+)</name>
        <dbReference type="ChEBI" id="CHEBI:29105"/>
        <label>4</label>
    </ligand>
</feature>
<feature type="binding site" evidence="5">
    <location>
        <position position="1770"/>
    </location>
    <ligand>
        <name>Zn(2+)</name>
        <dbReference type="ChEBI" id="CHEBI:29105"/>
        <label>4</label>
    </ligand>
</feature>
<feature type="binding site" evidence="5">
    <location>
        <position position="1772"/>
    </location>
    <ligand>
        <name>Zn(2+)</name>
        <dbReference type="ChEBI" id="CHEBI:29105"/>
        <label>4</label>
    </ligand>
</feature>
<feature type="binding site" evidence="20">
    <location>
        <position position="2382"/>
    </location>
    <ligand>
        <name>Zn(2+)</name>
        <dbReference type="ChEBI" id="CHEBI:29105"/>
        <label>5</label>
    </ligand>
</feature>
<feature type="binding site" evidence="20">
    <location>
        <position position="2387"/>
    </location>
    <ligand>
        <name>Zn(2+)</name>
        <dbReference type="ChEBI" id="CHEBI:29105"/>
        <label>5</label>
    </ligand>
</feature>
<feature type="binding site" evidence="20">
    <location>
        <position position="2392"/>
    </location>
    <ligand>
        <name>Zn(2+)</name>
        <dbReference type="ChEBI" id="CHEBI:29105"/>
        <label>5</label>
    </ligand>
</feature>
<feature type="binding site" evidence="20">
    <location>
        <position position="2395"/>
    </location>
    <ligand>
        <name>Zn(2+)</name>
        <dbReference type="ChEBI" id="CHEBI:29105"/>
        <label>5</label>
    </ligand>
</feature>
<feature type="binding site" evidence="20">
    <location>
        <position position="2428"/>
    </location>
    <ligand>
        <name>Zn(2+)</name>
        <dbReference type="ChEBI" id="CHEBI:29105"/>
        <label>6</label>
    </ligand>
</feature>
<feature type="binding site" evidence="20">
    <location>
        <position position="2431"/>
    </location>
    <ligand>
        <name>Zn(2+)</name>
        <dbReference type="ChEBI" id="CHEBI:29105"/>
        <label>6</label>
    </ligand>
</feature>
<feature type="binding site" evidence="20">
    <location>
        <position position="2435"/>
    </location>
    <ligand>
        <name>Zn(2+)</name>
        <dbReference type="ChEBI" id="CHEBI:29105"/>
        <label>6</label>
    </ligand>
</feature>
<feature type="binding site" evidence="20">
    <location>
        <position position="2438"/>
    </location>
    <ligand>
        <name>Zn(2+)</name>
        <dbReference type="ChEBI" id="CHEBI:29105"/>
        <label>6</label>
    </ligand>
</feature>
<feature type="binding site" evidence="14">
    <location>
        <position position="4310"/>
    </location>
    <ligand>
        <name>Zn(2+)</name>
        <dbReference type="ChEBI" id="CHEBI:29105"/>
        <label>7</label>
    </ligand>
</feature>
<feature type="binding site" evidence="14">
    <location>
        <position position="4313"/>
    </location>
    <ligand>
        <name>Zn(2+)</name>
        <dbReference type="ChEBI" id="CHEBI:29105"/>
        <label>7</label>
    </ligand>
</feature>
<feature type="binding site" evidence="14">
    <location>
        <position position="4319"/>
    </location>
    <ligand>
        <name>Zn(2+)</name>
        <dbReference type="ChEBI" id="CHEBI:29105"/>
        <label>7</label>
    </ligand>
</feature>
<feature type="binding site" evidence="14">
    <location>
        <position position="4326"/>
    </location>
    <ligand>
        <name>Zn(2+)</name>
        <dbReference type="ChEBI" id="CHEBI:29105"/>
        <label>7</label>
    </ligand>
</feature>
<feature type="binding site" evidence="14">
    <location>
        <position position="4353"/>
    </location>
    <ligand>
        <name>Zn(2+)</name>
        <dbReference type="ChEBI" id="CHEBI:29105"/>
        <label>8</label>
    </ligand>
</feature>
<feature type="binding site" evidence="14">
    <location>
        <position position="4356"/>
    </location>
    <ligand>
        <name>Zn(2+)</name>
        <dbReference type="ChEBI" id="CHEBI:29105"/>
        <label>8</label>
    </ligand>
</feature>
<feature type="binding site" evidence="14">
    <location>
        <position position="4364"/>
    </location>
    <ligand>
        <name>Zn(2+)</name>
        <dbReference type="ChEBI" id="CHEBI:29105"/>
        <label>8</label>
    </ligand>
</feature>
<feature type="binding site" evidence="14">
    <location>
        <position position="4366"/>
    </location>
    <ligand>
        <name>Zn(2+)</name>
        <dbReference type="ChEBI" id="CHEBI:29105"/>
        <label>8</label>
    </ligand>
</feature>
<feature type="site" description="Cleavage" evidence="1">
    <location>
        <begin position="179"/>
        <end position="180"/>
    </location>
</feature>
<feature type="site" description="Cleavage; by PL-PRO" evidence="1">
    <location>
        <begin position="818"/>
        <end position="819"/>
    </location>
</feature>
<feature type="site" description="Cleavage; by PL-PRO" evidence="1">
    <location>
        <begin position="3246"/>
        <end position="3247"/>
    </location>
</feature>
<feature type="site" description="Cleavage; by 3CL-PRO" evidence="1">
    <location>
        <begin position="3552"/>
        <end position="3553"/>
    </location>
</feature>
<feature type="site" description="Cleavage; by 3CL-PRO" evidence="1">
    <location>
        <begin position="3842"/>
        <end position="3843"/>
    </location>
</feature>
<feature type="site" description="Cleavage; by 3CL-PRO" evidence="1">
    <location>
        <begin position="3925"/>
        <end position="3926"/>
    </location>
</feature>
<feature type="site" description="Cleavage; by 3CL-PRO" evidence="1">
    <location>
        <begin position="4123"/>
        <end position="4124"/>
    </location>
</feature>
<feature type="site" description="Cleavage; by 3CL-PRO" evidence="1">
    <location>
        <begin position="4236"/>
        <end position="4237"/>
    </location>
</feature>
<feature type="site" description="Cleavage; by 3CL-PRO" evidence="1">
    <location>
        <begin position="4375"/>
        <end position="4376"/>
    </location>
</feature>
<feature type="disulfide bond" evidence="21">
    <location>
        <begin position="2246"/>
        <end position="2274"/>
    </location>
</feature>
<feature type="disulfide bond" evidence="21">
    <location>
        <begin position="2265"/>
        <end position="2271"/>
    </location>
</feature>
<accession>P0C6F5</accession>
<accession>Q0Q476</accession>
<organism>
    <name type="scientific">Bat coronavirus 279/2005</name>
    <name type="common">BtCoV</name>
    <name type="synonym">BtCoV/279/2005</name>
    <dbReference type="NCBI Taxonomy" id="389167"/>
    <lineage>
        <taxon>Viruses</taxon>
        <taxon>Riboviria</taxon>
        <taxon>Orthornavirae</taxon>
        <taxon>Pisuviricota</taxon>
        <taxon>Pisoniviricetes</taxon>
        <taxon>Nidovirales</taxon>
        <taxon>Cornidovirineae</taxon>
        <taxon>Coronaviridae</taxon>
        <taxon>Orthocoronavirinae</taxon>
        <taxon>Betacoronavirus</taxon>
        <taxon>Sarbecovirus</taxon>
        <taxon>Severe acute respiratory syndrome coronavirus</taxon>
    </lineage>
</organism>
<name>R1A_BC279</name>
<reference key="1">
    <citation type="journal article" date="2006" name="J. Virol.">
        <title>Prevalence and genetic diversity of coronaviruses in bats from China.</title>
        <authorList>
            <person name="Tang X.C."/>
            <person name="Zhang J.X."/>
            <person name="Zhang S.Y."/>
            <person name="Wang P."/>
            <person name="Fan X.H."/>
            <person name="Li L.F."/>
            <person name="Li G."/>
            <person name="Dong B.Q."/>
            <person name="Liu W."/>
            <person name="Cheung C.L."/>
            <person name="Xu K.M."/>
            <person name="Song W.J."/>
            <person name="Vijaykrishna D."/>
            <person name="Poon L.L.M."/>
            <person name="Peiris J.S.M."/>
            <person name="Smith G.J."/>
            <person name="Chen H."/>
            <person name="Guan Y."/>
        </authorList>
    </citation>
    <scope>NUCLEOTIDE SEQUENCE [GENOMIC RNA]</scope>
</reference>
<evidence type="ECO:0000250" key="1"/>
<evidence type="ECO:0000250" key="2">
    <source>
        <dbReference type="UniProtKB" id="P0DTC1"/>
    </source>
</evidence>
<evidence type="ECO:0000255" key="3"/>
<evidence type="ECO:0000255" key="4">
    <source>
        <dbReference type="PROSITE-ProRule" id="PRU00214"/>
    </source>
</evidence>
<evidence type="ECO:0000255" key="5">
    <source>
        <dbReference type="PROSITE-ProRule" id="PRU00444"/>
    </source>
</evidence>
<evidence type="ECO:0000255" key="6">
    <source>
        <dbReference type="PROSITE-ProRule" id="PRU00490"/>
    </source>
</evidence>
<evidence type="ECO:0000255" key="7">
    <source>
        <dbReference type="PROSITE-ProRule" id="PRU00772"/>
    </source>
</evidence>
<evidence type="ECO:0000255" key="8">
    <source>
        <dbReference type="PROSITE-ProRule" id="PRU01289"/>
    </source>
</evidence>
<evidence type="ECO:0000255" key="9">
    <source>
        <dbReference type="PROSITE-ProRule" id="PRU01290"/>
    </source>
</evidence>
<evidence type="ECO:0000255" key="10">
    <source>
        <dbReference type="PROSITE-ProRule" id="PRU01291"/>
    </source>
</evidence>
<evidence type="ECO:0000255" key="11">
    <source>
        <dbReference type="PROSITE-ProRule" id="PRU01294"/>
    </source>
</evidence>
<evidence type="ECO:0000255" key="12">
    <source>
        <dbReference type="PROSITE-ProRule" id="PRU01295"/>
    </source>
</evidence>
<evidence type="ECO:0000255" key="13">
    <source>
        <dbReference type="PROSITE-ProRule" id="PRU01296"/>
    </source>
</evidence>
<evidence type="ECO:0000255" key="14">
    <source>
        <dbReference type="PROSITE-ProRule" id="PRU01297"/>
    </source>
</evidence>
<evidence type="ECO:0000255" key="15">
    <source>
        <dbReference type="PROSITE-ProRule" id="PRU01307"/>
    </source>
</evidence>
<evidence type="ECO:0000255" key="16">
    <source>
        <dbReference type="PROSITE-ProRule" id="PRU01308"/>
    </source>
</evidence>
<evidence type="ECO:0000255" key="17">
    <source>
        <dbReference type="PROSITE-ProRule" id="PRU01333"/>
    </source>
</evidence>
<evidence type="ECO:0000255" key="18">
    <source>
        <dbReference type="PROSITE-ProRule" id="PRU01334"/>
    </source>
</evidence>
<evidence type="ECO:0000255" key="19">
    <source>
        <dbReference type="PROSITE-ProRule" id="PRU01335"/>
    </source>
</evidence>
<evidence type="ECO:0000255" key="20">
    <source>
        <dbReference type="PROSITE-ProRule" id="PRU01336"/>
    </source>
</evidence>
<evidence type="ECO:0000255" key="21">
    <source>
        <dbReference type="PROSITE-ProRule" id="PRU01337"/>
    </source>
</evidence>
<evidence type="ECO:0000255" key="22">
    <source>
        <dbReference type="PROSITE-ProRule" id="PRU01338"/>
    </source>
</evidence>
<evidence type="ECO:0000305" key="23"/>
<dbReference type="EC" id="3.4.19.12"/>
<dbReference type="EC" id="3.4.22.-"/>
<dbReference type="EC" id="3.4.22.69"/>
<dbReference type="EC" id="2.7.7.50"/>
<dbReference type="EMBL" id="DQ648857">
    <property type="status" value="NOT_ANNOTATED_CDS"/>
    <property type="molecule type" value="Genomic_RNA"/>
</dbReference>
<dbReference type="BMRB" id="P0C6F5"/>
<dbReference type="SMR" id="P0C6F5"/>
<dbReference type="Proteomes" id="UP000006573">
    <property type="component" value="Genome"/>
</dbReference>
<dbReference type="GO" id="GO:0033644">
    <property type="term" value="C:host cell membrane"/>
    <property type="evidence" value="ECO:0007669"/>
    <property type="project" value="UniProtKB-SubCell"/>
</dbReference>
<dbReference type="GO" id="GO:0044220">
    <property type="term" value="C:host cell perinuclear region of cytoplasm"/>
    <property type="evidence" value="ECO:0007669"/>
    <property type="project" value="UniProtKB-SubCell"/>
</dbReference>
<dbReference type="GO" id="GO:0016020">
    <property type="term" value="C:membrane"/>
    <property type="evidence" value="ECO:0007669"/>
    <property type="project" value="UniProtKB-KW"/>
</dbReference>
<dbReference type="GO" id="GO:0004843">
    <property type="term" value="F:cysteine-type deubiquitinase activity"/>
    <property type="evidence" value="ECO:0007669"/>
    <property type="project" value="UniProtKB-EC"/>
</dbReference>
<dbReference type="GO" id="GO:0004197">
    <property type="term" value="F:cysteine-type endopeptidase activity"/>
    <property type="evidence" value="ECO:0007669"/>
    <property type="project" value="InterPro"/>
</dbReference>
<dbReference type="GO" id="GO:0004519">
    <property type="term" value="F:endonuclease activity"/>
    <property type="evidence" value="ECO:0007669"/>
    <property type="project" value="UniProtKB-KW"/>
</dbReference>
<dbReference type="GO" id="GO:0002151">
    <property type="term" value="F:G-quadruplex RNA binding"/>
    <property type="evidence" value="ECO:0007669"/>
    <property type="project" value="InterPro"/>
</dbReference>
<dbReference type="GO" id="GO:0008168">
    <property type="term" value="F:methyltransferase activity"/>
    <property type="evidence" value="ECO:0007669"/>
    <property type="project" value="UniProtKB-KW"/>
</dbReference>
<dbReference type="GO" id="GO:0008242">
    <property type="term" value="F:omega peptidase activity"/>
    <property type="evidence" value="ECO:0007669"/>
    <property type="project" value="InterPro"/>
</dbReference>
<dbReference type="GO" id="GO:0003727">
    <property type="term" value="F:single-stranded RNA binding"/>
    <property type="evidence" value="ECO:0007669"/>
    <property type="project" value="InterPro"/>
</dbReference>
<dbReference type="GO" id="GO:0008270">
    <property type="term" value="F:zinc ion binding"/>
    <property type="evidence" value="ECO:0007669"/>
    <property type="project" value="UniProtKB-KW"/>
</dbReference>
<dbReference type="GO" id="GO:0032259">
    <property type="term" value="P:methylation"/>
    <property type="evidence" value="ECO:0007669"/>
    <property type="project" value="UniProtKB-KW"/>
</dbReference>
<dbReference type="GO" id="GO:0006508">
    <property type="term" value="P:proteolysis"/>
    <property type="evidence" value="ECO:0007669"/>
    <property type="project" value="UniProtKB-KW"/>
</dbReference>
<dbReference type="GO" id="GO:0010506">
    <property type="term" value="P:regulation of autophagy"/>
    <property type="evidence" value="ECO:0007669"/>
    <property type="project" value="InterPro"/>
</dbReference>
<dbReference type="GO" id="GO:0039520">
    <property type="term" value="P:symbiont-mediated activation of host autophagy"/>
    <property type="evidence" value="ECO:0007669"/>
    <property type="project" value="UniProtKB-KW"/>
</dbReference>
<dbReference type="GO" id="GO:0039595">
    <property type="term" value="P:symbiont-mediated degradation of host mRNA"/>
    <property type="evidence" value="ECO:0007669"/>
    <property type="project" value="UniProtKB-KW"/>
</dbReference>
<dbReference type="GO" id="GO:0039648">
    <property type="term" value="P:symbiont-mediated perturbation of host ubiquitin-like protein modification"/>
    <property type="evidence" value="ECO:0007669"/>
    <property type="project" value="UniProtKB-KW"/>
</dbReference>
<dbReference type="GO" id="GO:0039548">
    <property type="term" value="P:symbiont-mediated suppression of host cytoplasmic pattern recognition receptor signaling pathway via inhibition of IRF3 activity"/>
    <property type="evidence" value="ECO:0007669"/>
    <property type="project" value="UniProtKB-KW"/>
</dbReference>
<dbReference type="GO" id="GO:0039657">
    <property type="term" value="P:symbiont-mediated suppression of host gene expression"/>
    <property type="evidence" value="ECO:0007669"/>
    <property type="project" value="UniProtKB-KW"/>
</dbReference>
<dbReference type="GO" id="GO:0039579">
    <property type="term" value="P:symbiont-mediated suppression of host ISG15-protein conjugation"/>
    <property type="evidence" value="ECO:0007669"/>
    <property type="project" value="UniProtKB-KW"/>
</dbReference>
<dbReference type="GO" id="GO:0039502">
    <property type="term" value="P:symbiont-mediated suppression of host type I interferon-mediated signaling pathway"/>
    <property type="evidence" value="ECO:0007669"/>
    <property type="project" value="UniProtKB-KW"/>
</dbReference>
<dbReference type="GO" id="GO:0019079">
    <property type="term" value="P:viral genome replication"/>
    <property type="evidence" value="ECO:0007669"/>
    <property type="project" value="InterPro"/>
</dbReference>
<dbReference type="GO" id="GO:0019082">
    <property type="term" value="P:viral protein processing"/>
    <property type="evidence" value="ECO:0007669"/>
    <property type="project" value="InterPro"/>
</dbReference>
<dbReference type="GO" id="GO:0075523">
    <property type="term" value="P:viral translational frameshifting"/>
    <property type="evidence" value="ECO:0007669"/>
    <property type="project" value="UniProtKB-KW"/>
</dbReference>
<dbReference type="CDD" id="cd21901">
    <property type="entry name" value="alpha_betaCoV_Nsp10"/>
    <property type="match status" value="1"/>
</dbReference>
<dbReference type="CDD" id="cd21560">
    <property type="entry name" value="betaCoV-Nsp6"/>
    <property type="match status" value="1"/>
</dbReference>
<dbReference type="CDD" id="cd21516">
    <property type="entry name" value="betaCoV_Nsp2_SARS-like"/>
    <property type="match status" value="1"/>
</dbReference>
<dbReference type="CDD" id="cd21666">
    <property type="entry name" value="betaCoV_Nsp5_Mpro"/>
    <property type="match status" value="1"/>
</dbReference>
<dbReference type="CDD" id="cd21827">
    <property type="entry name" value="betaCoV_Nsp7"/>
    <property type="match status" value="1"/>
</dbReference>
<dbReference type="CDD" id="cd21831">
    <property type="entry name" value="betaCoV_Nsp8"/>
    <property type="match status" value="1"/>
</dbReference>
<dbReference type="CDD" id="cd21898">
    <property type="entry name" value="betaCoV_Nsp9"/>
    <property type="match status" value="1"/>
</dbReference>
<dbReference type="CDD" id="cd21732">
    <property type="entry name" value="betaCoV_PLPro"/>
    <property type="match status" value="1"/>
</dbReference>
<dbReference type="CDD" id="cd21473">
    <property type="entry name" value="cv_Nsp4_TM"/>
    <property type="match status" value="1"/>
</dbReference>
<dbReference type="CDD" id="cd21563">
    <property type="entry name" value="Macro_cv_SUD-M_Nsp3-like"/>
    <property type="match status" value="1"/>
</dbReference>
<dbReference type="CDD" id="cd21562">
    <property type="entry name" value="Macro_cv_SUD-N_Nsp3-like"/>
    <property type="match status" value="1"/>
</dbReference>
<dbReference type="CDD" id="cd21557">
    <property type="entry name" value="Macro_X_Nsp3-like"/>
    <property type="match status" value="1"/>
</dbReference>
<dbReference type="CDD" id="cd22662">
    <property type="entry name" value="SARS-CoV-like_Nsp1_C"/>
    <property type="match status" value="1"/>
</dbReference>
<dbReference type="CDD" id="cd21796">
    <property type="entry name" value="SARS-CoV-like_Nsp1_N"/>
    <property type="match status" value="1"/>
</dbReference>
<dbReference type="CDD" id="cd21814">
    <property type="entry name" value="SARS-CoV-like_Nsp3_betaSM"/>
    <property type="match status" value="1"/>
</dbReference>
<dbReference type="CDD" id="cd21822">
    <property type="entry name" value="SARS-CoV-like_Nsp3_NAB"/>
    <property type="match status" value="1"/>
</dbReference>
<dbReference type="CDD" id="cd21525">
    <property type="entry name" value="SUD_C_SARS-CoV_Nsp3"/>
    <property type="match status" value="1"/>
</dbReference>
<dbReference type="CDD" id="cd21717">
    <property type="entry name" value="TM_Y_SARS-CoV-like_Nsp3_C"/>
    <property type="match status" value="1"/>
</dbReference>
<dbReference type="CDD" id="cd21467">
    <property type="entry name" value="Ubl1_cv_Nsp3_N-like"/>
    <property type="match status" value="1"/>
</dbReference>
<dbReference type="FunFam" id="1.10.8.370:FF:000001">
    <property type="entry name" value="Orf1a polyprotein"/>
    <property type="match status" value="1"/>
</dbReference>
<dbReference type="FunFam" id="2.40.10.250:FF:000001">
    <property type="entry name" value="Orf1a polyprotein"/>
    <property type="match status" value="1"/>
</dbReference>
<dbReference type="FunFam" id="1.10.150.420:FF:000001">
    <property type="entry name" value="Replicase polyprotein"/>
    <property type="match status" value="1"/>
</dbReference>
<dbReference type="FunFam" id="1.10.1840.10:FF:000001">
    <property type="entry name" value="Replicase polyprotein 1a"/>
    <property type="match status" value="1"/>
</dbReference>
<dbReference type="FunFam" id="1.10.8.1190:FF:000001">
    <property type="entry name" value="Replicase polyprotein 1a"/>
    <property type="match status" value="1"/>
</dbReference>
<dbReference type="FunFam" id="2.40.10.10:FF:000033">
    <property type="entry name" value="Replicase polyprotein 1a"/>
    <property type="match status" value="1"/>
</dbReference>
<dbReference type="Gene3D" id="1.10.8.1190">
    <property type="match status" value="1"/>
</dbReference>
<dbReference type="Gene3D" id="2.60.120.1680">
    <property type="match status" value="1"/>
</dbReference>
<dbReference type="Gene3D" id="3.10.20.350">
    <property type="match status" value="1"/>
</dbReference>
<dbReference type="Gene3D" id="3.10.20.540">
    <property type="match status" value="1"/>
</dbReference>
<dbReference type="Gene3D" id="6.10.140.2090">
    <property type="match status" value="1"/>
</dbReference>
<dbReference type="Gene3D" id="1.10.150.420">
    <property type="entry name" value="Coronavirus nonstructural protein 4 C-terminus"/>
    <property type="match status" value="1"/>
</dbReference>
<dbReference type="Gene3D" id="3.40.30.150">
    <property type="entry name" value="Coronavirus polyprotein cleavage domain"/>
    <property type="match status" value="1"/>
</dbReference>
<dbReference type="Gene3D" id="3.40.220.10">
    <property type="entry name" value="Leucine Aminopeptidase, subunit E, domain 1"/>
    <property type="match status" value="1"/>
</dbReference>
<dbReference type="Gene3D" id="1.10.1840.10">
    <property type="entry name" value="main proteinase (3clpro) structure, domain 3"/>
    <property type="match status" value="1"/>
</dbReference>
<dbReference type="Gene3D" id="3.40.220.20">
    <property type="entry name" value="Nsp3, SUD-M subdomain"/>
    <property type="match status" value="1"/>
</dbReference>
<dbReference type="Gene3D" id="3.40.220.30">
    <property type="entry name" value="Nsp3, SUD-N subdomain"/>
    <property type="match status" value="1"/>
</dbReference>
<dbReference type="Gene3D" id="1.10.8.370">
    <property type="entry name" value="nsp7 replicase"/>
    <property type="match status" value="1"/>
</dbReference>
<dbReference type="Gene3D" id="3.30.70.3540">
    <property type="entry name" value="Nsp8 replicase, head domain"/>
    <property type="match status" value="1"/>
</dbReference>
<dbReference type="Gene3D" id="2.40.10.250">
    <property type="entry name" value="Replicase NSP9"/>
    <property type="match status" value="1"/>
</dbReference>
<dbReference type="Gene3D" id="3.40.50.11020">
    <property type="entry name" value="Replicase polyprotein, nucleic acid-binding domain"/>
    <property type="match status" value="1"/>
</dbReference>
<dbReference type="Gene3D" id="2.40.10.10">
    <property type="entry name" value="Trypsin-like serine proteases"/>
    <property type="match status" value="2"/>
</dbReference>
<dbReference type="InterPro" id="IPR046443">
    <property type="entry name" value="a/bCoV_NSP1_glob"/>
</dbReference>
<dbReference type="InterPro" id="IPR046442">
    <property type="entry name" value="bCoV_NSP1_C"/>
</dbReference>
<dbReference type="InterPro" id="IPR043613">
    <property type="entry name" value="CoV_NSP2_C"/>
</dbReference>
<dbReference type="InterPro" id="IPR047573">
    <property type="entry name" value="CoV_NSP2_M"/>
</dbReference>
<dbReference type="InterPro" id="IPR049894">
    <property type="entry name" value="COV_NSP3_3ECTO"/>
</dbReference>
<dbReference type="InterPro" id="IPR043611">
    <property type="entry name" value="CoV_NSP3_C"/>
</dbReference>
<dbReference type="InterPro" id="IPR047566">
    <property type="entry name" value="CoV_NSP3_Y"/>
</dbReference>
<dbReference type="InterPro" id="IPR032505">
    <property type="entry name" value="CoV_NSP4_C"/>
</dbReference>
<dbReference type="InterPro" id="IPR043612">
    <property type="entry name" value="CoV_NSP4_N"/>
</dbReference>
<dbReference type="InterPro" id="IPR022733">
    <property type="entry name" value="DPUP_SUD_C_bCoV"/>
</dbReference>
<dbReference type="InterPro" id="IPR002589">
    <property type="entry name" value="Macro_dom"/>
</dbReference>
<dbReference type="InterPro" id="IPR043472">
    <property type="entry name" value="Macro_dom-like"/>
</dbReference>
<dbReference type="InterPro" id="IPR044371">
    <property type="entry name" value="Macro_X_NSP3-like"/>
</dbReference>
<dbReference type="InterPro" id="IPR036333">
    <property type="entry name" value="NSP10_sf_CoV"/>
</dbReference>
<dbReference type="InterPro" id="IPR021590">
    <property type="entry name" value="NSP1_glob_bCoV"/>
</dbReference>
<dbReference type="InterPro" id="IPR038030">
    <property type="entry name" value="NSP1_glob_sf_bCoV"/>
</dbReference>
<dbReference type="InterPro" id="IPR043615">
    <property type="entry name" value="NSP2_N_CoV"/>
</dbReference>
<dbReference type="InterPro" id="IPR044389">
    <property type="entry name" value="NSP2_SARS-CoV-like"/>
</dbReference>
<dbReference type="InterPro" id="IPR024375">
    <property type="entry name" value="NSP3_bCoV"/>
</dbReference>
<dbReference type="InterPro" id="IPR047567">
    <property type="entry name" value="NSP3_G2M_bCoV"/>
</dbReference>
<dbReference type="InterPro" id="IPR024358">
    <property type="entry name" value="NSP3_N_bCoV"/>
</dbReference>
<dbReference type="InterPro" id="IPR032592">
    <property type="entry name" value="NSP3_NAB_bCoV"/>
</dbReference>
<dbReference type="InterPro" id="IPR042570">
    <property type="entry name" value="NSP3_NAB_bCoV_sf"/>
</dbReference>
<dbReference type="InterPro" id="IPR038166">
    <property type="entry name" value="NSP3_PL2pro_sf_bCoV"/>
</dbReference>
<dbReference type="InterPro" id="IPR038400">
    <property type="entry name" value="NSP3_SUD-M_sf_bCoV"/>
</dbReference>
<dbReference type="InterPro" id="IPR044864">
    <property type="entry name" value="NSP3_SUD-N_bCoV"/>
</dbReference>
<dbReference type="InterPro" id="IPR044374">
    <property type="entry name" value="NSP3_SUD-N_SARS-CoV"/>
</dbReference>
<dbReference type="InterPro" id="IPR043478">
    <property type="entry name" value="NSP3_SUD-N_sf_bCoV"/>
</dbReference>
<dbReference type="InterPro" id="IPR044357">
    <property type="entry name" value="NSP3_Ubl1_dom_CoV"/>
</dbReference>
<dbReference type="InterPro" id="IPR044353">
    <property type="entry name" value="Nsp3_Ubl2_dom_CoV"/>
</dbReference>
<dbReference type="InterPro" id="IPR038083">
    <property type="entry name" value="NSP3A-like"/>
</dbReference>
<dbReference type="InterPro" id="IPR038123">
    <property type="entry name" value="NSP4_C_sf_CoV"/>
</dbReference>
<dbReference type="InterPro" id="IPR044367">
    <property type="entry name" value="NSP6_betaCoV"/>
</dbReference>
<dbReference type="InterPro" id="IPR043610">
    <property type="entry name" value="NSP6_CoV"/>
</dbReference>
<dbReference type="InterPro" id="IPR014828">
    <property type="entry name" value="NSP7_CoV"/>
</dbReference>
<dbReference type="InterPro" id="IPR037204">
    <property type="entry name" value="NSP7_sf_CoV"/>
</dbReference>
<dbReference type="InterPro" id="IPR014829">
    <property type="entry name" value="NSP8_CoV"/>
</dbReference>
<dbReference type="InterPro" id="IPR037230">
    <property type="entry name" value="NSP8_sf_CoV"/>
</dbReference>
<dbReference type="InterPro" id="IPR014822">
    <property type="entry name" value="NSP9_CoV"/>
</dbReference>
<dbReference type="InterPro" id="IPR036499">
    <property type="entry name" value="NSP9_sf_CoV"/>
</dbReference>
<dbReference type="InterPro" id="IPR013016">
    <property type="entry name" value="Peptidase_C16_CoV"/>
</dbReference>
<dbReference type="InterPro" id="IPR008740">
    <property type="entry name" value="Peptidase_C30_CoV"/>
</dbReference>
<dbReference type="InterPro" id="IPR043477">
    <property type="entry name" value="Peptidase_C30_dom3_CoV"/>
</dbReference>
<dbReference type="InterPro" id="IPR009003">
    <property type="entry name" value="Peptidase_S1_PA"/>
</dbReference>
<dbReference type="InterPro" id="IPR043504">
    <property type="entry name" value="Peptidase_S1_PA_chymotrypsin"/>
</dbReference>
<dbReference type="InterPro" id="IPR043177">
    <property type="entry name" value="PLpro_N_sf_CoV"/>
</dbReference>
<dbReference type="InterPro" id="IPR043503">
    <property type="entry name" value="PLpro_palm_finger_dom_CoV"/>
</dbReference>
<dbReference type="InterPro" id="IPR043178">
    <property type="entry name" value="PLpro_thumb_sf_CoV"/>
</dbReference>
<dbReference type="InterPro" id="IPR018995">
    <property type="entry name" value="RNA_synth_NSP10_CoV"/>
</dbReference>
<dbReference type="Pfam" id="PF16251">
    <property type="entry name" value="bCoV_NAB"/>
    <property type="match status" value="1"/>
</dbReference>
<dbReference type="Pfam" id="PF11501">
    <property type="entry name" value="bCoV_NSP1"/>
    <property type="match status" value="1"/>
</dbReference>
<dbReference type="Pfam" id="PF12379">
    <property type="entry name" value="bCoV_NSP3_N"/>
    <property type="match status" value="1"/>
</dbReference>
<dbReference type="Pfam" id="PF12124">
    <property type="entry name" value="bCoV_SUD_C"/>
    <property type="match status" value="1"/>
</dbReference>
<dbReference type="Pfam" id="PF11633">
    <property type="entry name" value="bCoV_SUD_M"/>
    <property type="match status" value="1"/>
</dbReference>
<dbReference type="Pfam" id="PF09401">
    <property type="entry name" value="CoV_NSP10"/>
    <property type="match status" value="1"/>
</dbReference>
<dbReference type="Pfam" id="PF19212">
    <property type="entry name" value="CoV_NSP2_C"/>
    <property type="match status" value="1"/>
</dbReference>
<dbReference type="Pfam" id="PF19211">
    <property type="entry name" value="CoV_NSP2_N"/>
    <property type="match status" value="1"/>
</dbReference>
<dbReference type="Pfam" id="PF19218">
    <property type="entry name" value="CoV_NSP3_C"/>
    <property type="match status" value="1"/>
</dbReference>
<dbReference type="Pfam" id="PF16348">
    <property type="entry name" value="CoV_NSP4_C"/>
    <property type="match status" value="1"/>
</dbReference>
<dbReference type="Pfam" id="PF19217">
    <property type="entry name" value="CoV_NSP4_N"/>
    <property type="match status" value="1"/>
</dbReference>
<dbReference type="Pfam" id="PF19213">
    <property type="entry name" value="CoV_NSP6"/>
    <property type="match status" value="1"/>
</dbReference>
<dbReference type="Pfam" id="PF08716">
    <property type="entry name" value="CoV_NSP7"/>
    <property type="match status" value="1"/>
</dbReference>
<dbReference type="Pfam" id="PF08717">
    <property type="entry name" value="CoV_NSP8"/>
    <property type="match status" value="1"/>
</dbReference>
<dbReference type="Pfam" id="PF08710">
    <property type="entry name" value="CoV_NSP9"/>
    <property type="match status" value="1"/>
</dbReference>
<dbReference type="Pfam" id="PF08715">
    <property type="entry name" value="CoV_peptidase"/>
    <property type="match status" value="1"/>
</dbReference>
<dbReference type="Pfam" id="PF01661">
    <property type="entry name" value="Macro"/>
    <property type="match status" value="1"/>
</dbReference>
<dbReference type="Pfam" id="PF05409">
    <property type="entry name" value="Peptidase_C30"/>
    <property type="match status" value="1"/>
</dbReference>
<dbReference type="SMART" id="SM00506">
    <property type="entry name" value="A1pp"/>
    <property type="match status" value="1"/>
</dbReference>
<dbReference type="SUPFAM" id="SSF144246">
    <property type="entry name" value="Coronavirus NSP10-like"/>
    <property type="match status" value="1"/>
</dbReference>
<dbReference type="SUPFAM" id="SSF140367">
    <property type="entry name" value="Coronavirus NSP7-like"/>
    <property type="match status" value="1"/>
</dbReference>
<dbReference type="SUPFAM" id="SSF143076">
    <property type="entry name" value="Coronavirus NSP8-like"/>
    <property type="match status" value="1"/>
</dbReference>
<dbReference type="SUPFAM" id="SSF52949">
    <property type="entry name" value="Macro domain-like"/>
    <property type="match status" value="1"/>
</dbReference>
<dbReference type="SUPFAM" id="SSF159936">
    <property type="entry name" value="NSP3A-like"/>
    <property type="match status" value="1"/>
</dbReference>
<dbReference type="SUPFAM" id="SSF101816">
    <property type="entry name" value="Replicase NSP9"/>
    <property type="match status" value="1"/>
</dbReference>
<dbReference type="SUPFAM" id="SSF160099">
    <property type="entry name" value="SARS Nsp1-like"/>
    <property type="match status" value="1"/>
</dbReference>
<dbReference type="SUPFAM" id="SSF50494">
    <property type="entry name" value="Trypsin-like serine proteases"/>
    <property type="match status" value="1"/>
</dbReference>
<dbReference type="PROSITE" id="PS51963">
    <property type="entry name" value="BCOV_NSP1_C"/>
    <property type="match status" value="1"/>
</dbReference>
<dbReference type="PROSITE" id="PS51942">
    <property type="entry name" value="BCOV_NSP3C_C"/>
    <property type="match status" value="1"/>
</dbReference>
<dbReference type="PROSITE" id="PS51941">
    <property type="entry name" value="BCOV_NSP3C_M"/>
    <property type="match status" value="1"/>
</dbReference>
<dbReference type="PROSITE" id="PS51994">
    <property type="entry name" value="BCOV_NSP3E_G2M"/>
    <property type="match status" value="1"/>
</dbReference>
<dbReference type="PROSITE" id="PS51945">
    <property type="entry name" value="BCOV_NSP3E_NAB"/>
    <property type="match status" value="1"/>
</dbReference>
<dbReference type="PROSITE" id="PS51993">
    <property type="entry name" value="COV_3ECTO"/>
    <property type="match status" value="1"/>
</dbReference>
<dbReference type="PROSITE" id="PS51952">
    <property type="entry name" value="COV_EXON_MTASE_COACT"/>
    <property type="match status" value="1"/>
</dbReference>
<dbReference type="PROSITE" id="PS51962">
    <property type="entry name" value="COV_NSP1"/>
    <property type="match status" value="1"/>
</dbReference>
<dbReference type="PROSITE" id="PS51991">
    <property type="entry name" value="COV_NSP2_C"/>
    <property type="match status" value="1"/>
</dbReference>
<dbReference type="PROSITE" id="PS51990">
    <property type="entry name" value="COV_NSP2_M"/>
    <property type="match status" value="1"/>
</dbReference>
<dbReference type="PROSITE" id="PS51989">
    <property type="entry name" value="COV_NSP2_N"/>
    <property type="match status" value="1"/>
</dbReference>
<dbReference type="PROSITE" id="PS51992">
    <property type="entry name" value="COV_NSP3_Y"/>
    <property type="match status" value="1"/>
</dbReference>
<dbReference type="PROSITE" id="PS51943">
    <property type="entry name" value="COV_NSP3A_UBL"/>
    <property type="match status" value="1"/>
</dbReference>
<dbReference type="PROSITE" id="PS51944">
    <property type="entry name" value="COV_NSP3D_UBL"/>
    <property type="match status" value="1"/>
</dbReference>
<dbReference type="PROSITE" id="PS51946">
    <property type="entry name" value="COV_NSP4C"/>
    <property type="match status" value="1"/>
</dbReference>
<dbReference type="PROSITE" id="PS51949">
    <property type="entry name" value="COV_NSP7"/>
    <property type="match status" value="1"/>
</dbReference>
<dbReference type="PROSITE" id="PS51950">
    <property type="entry name" value="COV_NSP8"/>
    <property type="match status" value="1"/>
</dbReference>
<dbReference type="PROSITE" id="PS51951">
    <property type="entry name" value="COV_NSP9_SSRNA_BD"/>
    <property type="match status" value="1"/>
</dbReference>
<dbReference type="PROSITE" id="PS51442">
    <property type="entry name" value="M_PRO"/>
    <property type="match status" value="1"/>
</dbReference>
<dbReference type="PROSITE" id="PS51154">
    <property type="entry name" value="MACRO"/>
    <property type="match status" value="1"/>
</dbReference>
<dbReference type="PROSITE" id="PS51124">
    <property type="entry name" value="PEPTIDASE_C16"/>
    <property type="match status" value="1"/>
</dbReference>
<dbReference type="PROSITE" id="PS51940">
    <property type="entry name" value="SARS_NSP3C_N"/>
    <property type="match status" value="1"/>
</dbReference>
<gene>
    <name type="ORF">1a</name>
</gene>
<proteinExistence type="inferred from homology"/>
<keyword id="KW-1072">Activation of host autophagy by virus</keyword>
<keyword id="KW-1132">Decay of host mRNAs by virus</keyword>
<keyword id="KW-1015">Disulfide bond</keyword>
<keyword id="KW-0255">Endonuclease</keyword>
<keyword id="KW-1262">Eukaryotic host gene expression shutoff by virus</keyword>
<keyword id="KW-1193">Eukaryotic host translation shutoff by virus</keyword>
<keyword id="KW-1035">Host cytoplasm</keyword>
<keyword id="KW-1190">Host gene expression shutoff by virus</keyword>
<keyword id="KW-1043">Host membrane</keyword>
<keyword id="KW-1192">Host mRNA suppression by virus</keyword>
<keyword id="KW-0945">Host-virus interaction</keyword>
<keyword id="KW-0378">Hydrolase</keyword>
<keyword id="KW-1090">Inhibition of host innate immune response by virus</keyword>
<keyword id="KW-1114">Inhibition of host interferon signaling pathway by virus</keyword>
<keyword id="KW-1092">Inhibition of host IRF3 by virus</keyword>
<keyword id="KW-1095">Inhibition of host ISG15 by virus</keyword>
<keyword id="KW-1113">Inhibition of host RLR pathway by virus</keyword>
<keyword id="KW-0922">Interferon antiviral system evasion</keyword>
<keyword id="KW-0472">Membrane</keyword>
<keyword id="KW-0479">Metal-binding</keyword>
<keyword id="KW-0489">Methyltransferase</keyword>
<keyword id="KW-1127">Modulation of host ubiquitin pathway by viral deubiquitinase</keyword>
<keyword id="KW-1130">Modulation of host ubiquitin pathway by virus</keyword>
<keyword id="KW-0540">Nuclease</keyword>
<keyword id="KW-0645">Protease</keyword>
<keyword id="KW-0677">Repeat</keyword>
<keyword id="KW-0688">Ribosomal frameshifting</keyword>
<keyword id="KW-0694">RNA-binding</keyword>
<keyword id="KW-0788">Thiol protease</keyword>
<keyword id="KW-0808">Transferase</keyword>
<keyword id="KW-0812">Transmembrane</keyword>
<keyword id="KW-1133">Transmembrane helix</keyword>
<keyword id="KW-0833">Ubl conjugation pathway</keyword>
<keyword id="KW-0899">Viral immunoevasion</keyword>
<keyword id="KW-0862">Zinc</keyword>
<keyword id="KW-0863">Zinc-finger</keyword>
<sequence length="4388" mass="487709">MESLALGVSEKTHVQLSLPVLQVRDVLVRGFGDSVEEALAEAREHLKNGTCGLVELEKGVLPQLEQPYVFIKRSDAQGTNHGYKVVELVAELDGIQYGRSGTTLGVLVPHVGETPVAYRNVLLRKNGNKGAGGHSYGIDLKSYDLGVELGTDPIEDYEQNWNTKHGGGVLRELIRELNGGAFTRYVDNNFCGPDGYPLECIKDLLARAGKSMCTLSEQLDYIESKRGVYCCREHEHEIVWFTERSEKSYERQTPFEIKSAKKFDTFKGECPKFVFPLNSKVKVIQPRVEKKKTEGFMGRIRSVYPVATPQECNDMHLSTLMKCNHCDEVSWQTCDFLKATCEQCGTENLVCEGPTTCGYLPANAVVKMPCPACQDPEVGPEHSVADYHNHSNIETRLRKGGRTKCFGGCVFAYVGCYNKRAYWVPRASANIGASHTGITGDNVETLNEDLMEILNRDRVNINIVGDFHLNEEVAIILASFSASTCAFVDTVKGLDYKTFKDIVESCGNFKVTRGRAKKGAWNIGQEKSILTPLYGFPSQAAGVIRSIFTRALDTANHSIPDLQRAAITILDGISEQSLRLIDAMVYTSDLLTNSVIVMAYVTGGLVQQITQWLSNMLGTTVDKLKPVFTWVEAKLSAGIEFLRDAWEILKFLVTGVFDIVKGQIQVASDNLKECVKAFLDVLNKALEMCIDQVIIAGAKLRTLNLGEVFIAQSKGLYRQCIRGKEQLQLLMPLRAPKEVTFFEGDSHDTVFTSEEVVLKNGELEALETPVDSFTNGAVIGTPVCVNGLMLLELKDKEQYCALSPGLLATNNVFSLKGGAPVKGVTFGEDTVLEVQGYKNVKITFELDERVDKVLNEKCSVYTVESGTEVTEFACVVAEAVVKTLQPVSDLLTNMGIDLDEWSVATFYLFDDAGEEKLSSRMYCSFYPPDEEEDCEEYEDEEEIPEETCEHEYGTEDDYKGLPLEFGASTEIQQVDEEEEEDWLEEAIAAKPEPEPLPEEPVNQFTGYLKLTDNVAIKCVDIVKEAQHAKPTVIVNAANVHLKHGGGVAGALNKATNGAMQQESDDYIKKNGPLTVGGSCLLSGHNLAKKCMHVVGPNLNAGEDVQLLKAAYANFNSQDVLLAPLLSAGIFGAKPLQSLKMCVETVRTQVYFAVNDQDLYDHVVLGYLDSLKPKVETPTQENLELKEQPAVETLTQENLELEELPVIEKPVDVKFKARIEEVNTSLEETKFLTSRLLLFADINGKLYQDSQNMLRGEDMFFLEKDAPYIVGDVISSGDITCVIIPAKKAGGTTEMLAKALKKVPVSEYITTYPGQGCAGYTLEEAKTALRKCKSVFYVLPSKTPNDKEEILGTVSWNLREMLAHAEETRKLMLICMDVKALMSTIHRRYKGIKVQEGIVDYGVRFFFYTSKEPVASIITKLNLLNEPLVTMPIGYVTHGLNLEEAARCMRSLKAPAVVSVSSPDAVTTYNGYLTSSSKTSEEHFIETVSLAGMYRDWSYSGQRTELGVEFLKRGDKVVYHTVGSPIQFHLDGEVLLLDKLKSLLSLREVRTIKVFTTVDNTNLHTQIVDMSMTYGQQFGPTYLDGADVTKIKPHAKHEGKTFFVLPSDDTLRSEAFEYYHTLDESFLGRYMSALNHTKKWKFPQIGGLTSIKWADNNCYLSSVLLALQQIEVKFNAPALQEAYYRARAGDAANFCALILAYSNRTVGELGDVRETMTHLLQHANLESAKRVLNVVCKTCGQKSTTLTGVEAVMYMGTLSYEELKTGVTIPCICGRDATQYLVQQESSFVMMSAPPSEYTLQQGAFLCANEYTGSYQCGHYTHVTVKETLYRIDGAYLTKMSEYKGPVTDVFYKEISYTTTIKPVSYKLDGVIYTEIQPKLDEYYKKDNAYYTEQPIDLVPTQPLPNASFDNFKLTCSNTKFADDLNQMTGFKKPASRELSVTFFPDLNGDVVAIDYRHYSASFKKGAKLLHKPIIWHINQTTNKTTYKPNTWCLRCLWSTKPVETSNSFEVLEVEDTQGMDNLACESQTPTSEEVVENPTIQKEVIECDVKTIEVVGNVILKPSEEGVKVTQELGHEDLMAAYVEETSITIKKPNELSLALGLRTLATHGAAAINSVPWSKILAYVKPFLGQAAVTTTNCIKRCVQRVFNNYMPYVITLLFQLCTFTRSTNSRIRASLPTTIAKNSVKSVAKLCLDVCINYVKSPKFSKLFTIAMWLLLLSICLGSLIYVTAAFGVLLSNLGIPSYCDGVRESYVNSSNVTTMDFCEGSFLCSVCLNGLDSLDSYPALETIQVTISSYKLDLTSLGLAAEWFLAYMLFTKFFYLLGLSAIMQVFFGYFASHFISNSWLMWFIISIVQMAPVSAMVRMYIFFAFCYYVWKSYVHIMDGCTSSTCMMCYKRNRATRVECTTIVNGMKRSFYVYANGGRGFCKAHNWNCLNCDTFCAGSTFISDEVARDLSLQFKRPINPTDQSSYVVDSVAVKNGALHLYFDKAGQKTYERHPLSHFVNLDNLRANNTKGSLPINVIVFDGKSKCDESAAKSASVYYSQLMCQPILLLDQALVSDVGDSTEVSVKMFDAYVDTFSATFSVPMEKLKALVATAHSELAKGVALDGVLSTFVSAARQGVVDTDVDTKDVIECLKLSHHSDLEVTGDSCNNFMLTYNKVENMTPRDLGACIDCNARHINAQVAKSHNVSLIWNVKDYMSLSEQLRKQIRSAAKKNNIPFRLTCATTRQVVNAITTKISLKGGKIVSTWFKLMLKATLLCVLAALFCYIIMPVHSLSVHDGYTNEIIGYKAIQDGVTRDIMATDDCFANKHAGFDSWFSQRGGSYRNDKSCPVVAAIITREIGFIVPGLPGTVLRAINGDFLHFLPRVFSAVGNICYTPSKLIEYSDFATSACVLAAECTIFKDAMGKPVPYCYDTNLLEGSISYSELRPDTRYVLMDGSIIQFPNTYLEGSVRVVTTFDAEYCRHGTCERSEAGVCLSTSGRWVLNNEHYRALPGVFCGVDAMNLIANIFTPLVQPVGALDVSASVVAGGIIAILVTCAAYYFMKFRRAFGEYNHVVAANALLFLMSFTILCLAPAYSFLPGVYSIFYLYLTFYFTNDVSFLAHLQWFAMFSPIVPFWITAIYVFCISLKHCHWFFNNYLRKRVMFNGVTFSTFEEAALCTFLLNKEMYLKLRSETLLPLTQYNRYLALYNKYKYFSGALDTTSYREAACCHLAKALNDFSNSGADVLYQPPQTSITSAVLQSGFRKMAFPSGKVEGCMVQVTCGTTTLNGLWLDDTVYCPRHVICTAEDMLNPNYEDLLIRKSNHSFLVQAGNVQLRVIGHSMQNCLLRLKVDTSNPKTPKYKFVRIQPGQTFSVLACYNGSPSGVYQCAMRPNYTIKGSFLNGSCGSVGFNIDYDCVSFCYMHHMELPTGVHAGTDLEGKFYGPFVDRQTAQAAGTDTTITLNVLAWLYAAVINGDRWFLNRFTTTLNDFNLVAMKYNYEPLTQDHVDILGPLSAQTGIAVLDMCAALKELLQNGMNGRTILGSTILEDEFTPFDVVRQCSGVTFQGKFKKIVKGTHHWMLLTFLTSLLILVQSTQWSLFFFVYENAFLPFTLGIMAIAACAMLLVKHKHAFLCLFLLPSLATVAYFNMVYMPASWVMRIMTWLELADTSLSGYRLKDCVMYASALVLLVLMTARTVYDDAARRVWTLMNVITLVYKVYYGNSLDQAISMWALVISVTSNYSGVVTTIMFLARAIVFVCVEYYPLLFITGNTLQCIMLVYCFLGYCCCCYFGLFCLLNRYFRLTLGVYDYLVSTQEFRYMNSQGLLPPKSSIDAFKLNIKLLGIGGKPCIKVATVQSKMSDVKCTSVVLLSVLQQLRVESSSKLWAQCVQLHNDILLAKDTTEAFEKMVSLLSVLLSMQGAVDINKLCEEMLDNRATLQAIASEFSSLPSYAAYATAQEAYEQAVANGDSEVVLKKLKKSLNVAKSEFDRDAAMQRKLEKMADQAMTQMYKQARSEDKRAKVTSAMQTMLFTMLRKLDNDALNNIINNARDGCVPLNIIPLTTAAKLMVVVPDYGTYKNTCDGNTFTYASALWEIQQVVDADSKIVQLSEINMDNSQNLAWPLIVTALRANSAVKLQNNELSPVALRQMSCAAGTTQTACTDDNALAYYNNSKGGRFVLALLSDHQDLKWARFPKSDGTGTIYTELEPPCRFVTDTPRGPKVKYLYFIKGLNNLNRGMVLGSLAATVRLQAGNATEVPANSAVLSFCAFAVDPAKAYKDYLASGGQPITNCVKMLCTHTGTGQAITVTPEANMDQESFGGASCCLYCRCHIDHPNPKGFCDLKGKYVQIPATCANDPVGFTLKNTVCTVCGTWKGYGCSCDQLREPMMQSADASTFLNGFAV</sequence>
<comment type="function">
    <text evidence="1">The papain-like proteinase (PL-PRO) is responsible for the cleavages located at the N-terminus of replicase polyprotein. In addition, PL-PRO possesses a deubiquitinating/deISGylating activity and processes both 'Lys-48'- and 'Lys-63'-linked polyubiquitin chains from cellular substrates. Antagonizes innate immune induction of type I interferon by blocking the phosphorylation, dimerization and subsequent nuclear translocation of host IRF-3 (By similarity).</text>
</comment>
<comment type="function">
    <molecule>3C-like proteinase nsp5</molecule>
    <text evidence="7">Responsible for the majority of cleavages as it cleaves the C-terminus of replicase polyprotein at 11 sites. Recognizes substrates containing the core sequence [ILMVF]-Q-|-[SGACN]. Inhibited by the substrate-analog Cbz-Val-Asn-Ser-Thr-Leu-Gln-CMK. Also contains an ADP-ribose-1''-phosphate (ADRP)-binding function (By similarity).</text>
</comment>
<comment type="function">
    <text evidence="1">Nsp7-nsp8 hexadecamer may possibly confer processivity to the polymerase, maybe by binding to dsRNA or by producing primers utilized by the latter.</text>
</comment>
<comment type="function">
    <molecule>RNA-capping enzyme subunit nsp9</molecule>
    <text evidence="2">Catalytic subunit of viral RNA capping enzyme which catalyzes the RNA guanylyltransferase reaction for genomic and sub-genomic RNAs. The kinase-like NiRAN domain of NSP12 transfers RNA to the amino terminus of NSP9, forming a covalent RNA-protein intermediate. Subsequently, the NiRAN domain transfers RNA to GDP, forming the core cap structure GpppA-RNA. The NSP14 and NSP16 methyltransferases then add methyl groups to form functional cap structures.</text>
</comment>
<comment type="function">
    <molecule>Non-structural protein 1</molecule>
    <text evidence="1">Binds to the 40S ribosomal subunit and inhibits host translation. The nsp1-40S ribosome complex further induces an endonucleolytic cleavage near the 5'UTR of host mRNAs, targeting them for degradation. By suppressing host gene expression, nsp1 facilitates efficient viral gene expression in infected cells and evasion from host immune response (By similarity).</text>
</comment>
<comment type="catalytic activity">
    <molecule>Papain-like protease nsp3</molecule>
    <reaction evidence="2">
        <text>Thiol-dependent hydrolysis of ester, thioester, amide, peptide and isopeptide bonds formed by the C-terminal Gly of ubiquitin (a 76-residue protein attached to proteins as an intracellular targeting signal).</text>
        <dbReference type="EC" id="3.4.19.12"/>
    </reaction>
</comment>
<comment type="catalytic activity">
    <molecule>3C-like proteinase nsp5</molecule>
    <reaction evidence="2">
        <text>TSAVLQ-|-SGFRK-NH2 and SGVTFQ-|-GKFKK the two peptides corresponding to the two self-cleavage sites of the SARS 3C-like proteinase are the two most reactive peptide substrates. The enzyme exhibits a strong preference for substrates containing Gln at P1 position and Leu at P2 position.</text>
        <dbReference type="EC" id="3.4.22.69"/>
    </reaction>
</comment>
<comment type="catalytic activity">
    <molecule>RNA-capping enzyme subunit nsp9</molecule>
    <reaction evidence="2">
        <text>a 5'-end diphospho-ribonucleoside in mRNA + GTP + H(+) = a 5'-end (5'-triphosphoguanosine)-ribonucleoside in mRNA + diphosphate</text>
        <dbReference type="Rhea" id="RHEA:67012"/>
        <dbReference type="Rhea" id="RHEA-COMP:17165"/>
        <dbReference type="Rhea" id="RHEA-COMP:17166"/>
        <dbReference type="ChEBI" id="CHEBI:15378"/>
        <dbReference type="ChEBI" id="CHEBI:33019"/>
        <dbReference type="ChEBI" id="CHEBI:37565"/>
        <dbReference type="ChEBI" id="CHEBI:167616"/>
        <dbReference type="ChEBI" id="CHEBI:167617"/>
        <dbReference type="EC" id="2.7.7.50"/>
    </reaction>
    <physiologicalReaction direction="right-to-left" evidence="2">
        <dbReference type="Rhea" id="RHEA:67014"/>
    </physiologicalReaction>
</comment>
<comment type="subunit">
    <text evidence="1">3CL-PRO exists as monomer and homodimer. Eight copies of nsp7 and eight copies of nsp8 assemble to form a heterohexadecamer. Nsp9 is a dimer. Nsp10 forms a dodecamer (By similarity).</text>
</comment>
<comment type="subcellular location">
    <molecule>Papain-like protease nsp3</molecule>
    <subcellularLocation>
        <location evidence="23">Host membrane</location>
        <topology evidence="23">Multi-pass membrane protein</topology>
    </subcellularLocation>
</comment>
<comment type="subcellular location">
    <molecule>Non-structural protein 4</molecule>
    <subcellularLocation>
        <location evidence="23">Host membrane</location>
        <topology evidence="23">Multi-pass membrane protein</topology>
    </subcellularLocation>
</comment>
<comment type="subcellular location">
    <molecule>Non-structural protein 6</molecule>
    <subcellularLocation>
        <location evidence="23">Host membrane</location>
        <topology evidence="23">Multi-pass membrane protein</topology>
    </subcellularLocation>
</comment>
<comment type="subcellular location">
    <molecule>Non-structural protein 7</molecule>
    <subcellularLocation>
        <location evidence="1">Host cytoplasm</location>
        <location evidence="1">Host perinuclear region</location>
    </subcellularLocation>
    <text evidence="1">nsp7, nsp8, nsp9 and nsp10 are localized in cytoplasmic foci, largely perinuclear. Late in infection, they merge into confluent complexes (By similarity).</text>
</comment>
<comment type="subcellular location">
    <molecule>Non-structural protein 8</molecule>
    <subcellularLocation>
        <location evidence="1">Host cytoplasm</location>
        <location evidence="1">Host perinuclear region</location>
    </subcellularLocation>
    <text evidence="1">nsp7, nsp8, nsp9 and nsp10 are localized in cytoplasmic foci, largely perinuclear. Late in infection, they merge into confluent complexes (By similarity).</text>
</comment>
<comment type="subcellular location">
    <molecule>RNA-capping enzyme subunit nsp9</molecule>
    <subcellularLocation>
        <location evidence="1">Host cytoplasm</location>
        <location evidence="1">Host perinuclear region</location>
    </subcellularLocation>
    <text evidence="1">nsp7, nsp8, nsp9 and nsp10 are localized in cytoplasmic foci, largely perinuclear. Late in infection, they merge into confluent complexes (By similarity).</text>
</comment>
<comment type="subcellular location">
    <molecule>Non-structural protein 10</molecule>
    <subcellularLocation>
        <location evidence="1">Host cytoplasm</location>
        <location evidence="1">Host perinuclear region</location>
    </subcellularLocation>
    <text evidence="1">nsp7, nsp8, nsp9 and nsp10 are localized in cytoplasmic foci, largely perinuclear. Late in infection, they merge into confluent complexes (By similarity).</text>
</comment>
<comment type="alternative products">
    <event type="ribosomal frameshifting"/>
    <isoform>
        <id>P0C6F5-1</id>
        <name>Replicase polyprotein 1a</name>
        <name>pp1a</name>
        <name>ORF1a polyprotein</name>
        <sequence type="displayed"/>
    </isoform>
    <isoform>
        <id>P0C6V9-1</id>
        <name>Replicase polyprotein 1ab</name>
        <name>pp1ab</name>
        <sequence type="external"/>
    </isoform>
</comment>
<comment type="domain">
    <text evidence="1">The hydrophobic domains (HD) could mediate the membrane association of the replication complex and thereby alter the architecture of the host cell membrane.</text>
</comment>
<comment type="PTM">
    <text evidence="1">Specific enzymatic cleavages in vivo by its own proteases yield mature proteins. 3CL-PRO and PL-PRO proteinases are autocatalytically processed (By similarity).</text>
</comment>
<comment type="miscellaneous">
    <text>Bat coronavirus 279/2005 is highly similar to SARS-CoV (SARS-like).</text>
</comment>
<comment type="miscellaneous">
    <molecule>Isoform Replicase polyprotein 1a</molecule>
    <text>Produced by conventional translation.</text>
</comment>
<comment type="similarity">
    <text evidence="23">Belongs to the coronaviruses polyprotein 1ab family.</text>
</comment>